<reference key="1">
    <citation type="journal article" date="2009" name="J. Bacteriol.">
        <title>Genome sequences of three Agrobacterium biovars help elucidate the evolution of multichromosome genomes in bacteria.</title>
        <authorList>
            <person name="Slater S.C."/>
            <person name="Goldman B.S."/>
            <person name="Goodner B."/>
            <person name="Setubal J.C."/>
            <person name="Farrand S.K."/>
            <person name="Nester E.W."/>
            <person name="Burr T.J."/>
            <person name="Banta L."/>
            <person name="Dickerman A.W."/>
            <person name="Paulsen I."/>
            <person name="Otten L."/>
            <person name="Suen G."/>
            <person name="Welch R."/>
            <person name="Almeida N.F."/>
            <person name="Arnold F."/>
            <person name="Burton O.T."/>
            <person name="Du Z."/>
            <person name="Ewing A."/>
            <person name="Godsy E."/>
            <person name="Heisel S."/>
            <person name="Houmiel K.L."/>
            <person name="Jhaveri J."/>
            <person name="Lu J."/>
            <person name="Miller N.M."/>
            <person name="Norton S."/>
            <person name="Chen Q."/>
            <person name="Phoolcharoen W."/>
            <person name="Ohlin V."/>
            <person name="Ondrusek D."/>
            <person name="Pride N."/>
            <person name="Stricklin S.L."/>
            <person name="Sun J."/>
            <person name="Wheeler C."/>
            <person name="Wilson L."/>
            <person name="Zhu H."/>
            <person name="Wood D.W."/>
        </authorList>
    </citation>
    <scope>NUCLEOTIDE SEQUENCE [LARGE SCALE GENOMIC DNA]</scope>
    <source>
        <strain>ATCC BAA-846 / DSM 112012 / S4</strain>
    </source>
</reference>
<name>ILVD_ALLAM</name>
<organism>
    <name type="scientific">Allorhizobium ampelinum (strain ATCC BAA-846 / DSM 112012 / S4)</name>
    <name type="common">Agrobacterium vitis (strain S4)</name>
    <dbReference type="NCBI Taxonomy" id="311402"/>
    <lineage>
        <taxon>Bacteria</taxon>
        <taxon>Pseudomonadati</taxon>
        <taxon>Pseudomonadota</taxon>
        <taxon>Alphaproteobacteria</taxon>
        <taxon>Hyphomicrobiales</taxon>
        <taxon>Rhizobiaceae</taxon>
        <taxon>Rhizobium/Agrobacterium group</taxon>
        <taxon>Allorhizobium</taxon>
        <taxon>Allorhizobium ampelinum</taxon>
    </lineage>
</organism>
<comment type="function">
    <text evidence="1">Functions in the biosynthesis of branched-chain amino acids. Catalyzes the dehydration of (2R,3R)-2,3-dihydroxy-3-methylpentanoate (2,3-dihydroxy-3-methylvalerate) into 2-oxo-3-methylpentanoate (2-oxo-3-methylvalerate) and of (2R)-2,3-dihydroxy-3-methylbutanoate (2,3-dihydroxyisovalerate) into 2-oxo-3-methylbutanoate (2-oxoisovalerate), the penultimate precursor to L-isoleucine and L-valine, respectively.</text>
</comment>
<comment type="catalytic activity">
    <reaction evidence="1">
        <text>(2R)-2,3-dihydroxy-3-methylbutanoate = 3-methyl-2-oxobutanoate + H2O</text>
        <dbReference type="Rhea" id="RHEA:24809"/>
        <dbReference type="ChEBI" id="CHEBI:11851"/>
        <dbReference type="ChEBI" id="CHEBI:15377"/>
        <dbReference type="ChEBI" id="CHEBI:49072"/>
        <dbReference type="EC" id="4.2.1.9"/>
    </reaction>
    <physiologicalReaction direction="left-to-right" evidence="1">
        <dbReference type="Rhea" id="RHEA:24810"/>
    </physiologicalReaction>
</comment>
<comment type="catalytic activity">
    <reaction evidence="1">
        <text>(2R,3R)-2,3-dihydroxy-3-methylpentanoate = (S)-3-methyl-2-oxopentanoate + H2O</text>
        <dbReference type="Rhea" id="RHEA:27694"/>
        <dbReference type="ChEBI" id="CHEBI:15377"/>
        <dbReference type="ChEBI" id="CHEBI:35146"/>
        <dbReference type="ChEBI" id="CHEBI:49258"/>
        <dbReference type="EC" id="4.2.1.9"/>
    </reaction>
    <physiologicalReaction direction="left-to-right" evidence="1">
        <dbReference type="Rhea" id="RHEA:27695"/>
    </physiologicalReaction>
</comment>
<comment type="cofactor">
    <cofactor evidence="1">
        <name>[2Fe-2S] cluster</name>
        <dbReference type="ChEBI" id="CHEBI:190135"/>
    </cofactor>
    <text evidence="1">Binds 1 [2Fe-2S] cluster per subunit. This cluster acts as a Lewis acid cofactor.</text>
</comment>
<comment type="cofactor">
    <cofactor evidence="1">
        <name>Mg(2+)</name>
        <dbReference type="ChEBI" id="CHEBI:18420"/>
    </cofactor>
</comment>
<comment type="pathway">
    <text evidence="1">Amino-acid biosynthesis; L-isoleucine biosynthesis; L-isoleucine from 2-oxobutanoate: step 3/4.</text>
</comment>
<comment type="pathway">
    <text evidence="1">Amino-acid biosynthesis; L-valine biosynthesis; L-valine from pyruvate: step 3/4.</text>
</comment>
<comment type="subunit">
    <text evidence="1">Homodimer.</text>
</comment>
<comment type="similarity">
    <text evidence="1">Belongs to the IlvD/Edd family.</text>
</comment>
<evidence type="ECO:0000255" key="1">
    <source>
        <dbReference type="HAMAP-Rule" id="MF_00012"/>
    </source>
</evidence>
<proteinExistence type="inferred from homology"/>
<dbReference type="EC" id="4.2.1.9" evidence="1"/>
<dbReference type="EMBL" id="CP000633">
    <property type="protein sequence ID" value="ACM36721.1"/>
    <property type="molecule type" value="Genomic_DNA"/>
</dbReference>
<dbReference type="RefSeq" id="WP_015916142.1">
    <property type="nucleotide sequence ID" value="NC_011989.1"/>
</dbReference>
<dbReference type="SMR" id="B9JWU3"/>
<dbReference type="STRING" id="311402.Avi_2414"/>
<dbReference type="KEGG" id="avi:Avi_2414"/>
<dbReference type="eggNOG" id="COG0129">
    <property type="taxonomic scope" value="Bacteria"/>
</dbReference>
<dbReference type="HOGENOM" id="CLU_014271_4_3_5"/>
<dbReference type="UniPathway" id="UPA00047">
    <property type="reaction ID" value="UER00057"/>
</dbReference>
<dbReference type="UniPathway" id="UPA00049">
    <property type="reaction ID" value="UER00061"/>
</dbReference>
<dbReference type="Proteomes" id="UP000001596">
    <property type="component" value="Chromosome 1"/>
</dbReference>
<dbReference type="GO" id="GO:0005829">
    <property type="term" value="C:cytosol"/>
    <property type="evidence" value="ECO:0007669"/>
    <property type="project" value="TreeGrafter"/>
</dbReference>
<dbReference type="GO" id="GO:0051537">
    <property type="term" value="F:2 iron, 2 sulfur cluster binding"/>
    <property type="evidence" value="ECO:0007669"/>
    <property type="project" value="UniProtKB-UniRule"/>
</dbReference>
<dbReference type="GO" id="GO:0004160">
    <property type="term" value="F:dihydroxy-acid dehydratase activity"/>
    <property type="evidence" value="ECO:0007669"/>
    <property type="project" value="UniProtKB-UniRule"/>
</dbReference>
<dbReference type="GO" id="GO:0000287">
    <property type="term" value="F:magnesium ion binding"/>
    <property type="evidence" value="ECO:0007669"/>
    <property type="project" value="UniProtKB-UniRule"/>
</dbReference>
<dbReference type="GO" id="GO:0009097">
    <property type="term" value="P:isoleucine biosynthetic process"/>
    <property type="evidence" value="ECO:0007669"/>
    <property type="project" value="UniProtKB-UniRule"/>
</dbReference>
<dbReference type="GO" id="GO:0009099">
    <property type="term" value="P:L-valine biosynthetic process"/>
    <property type="evidence" value="ECO:0007669"/>
    <property type="project" value="UniProtKB-UniRule"/>
</dbReference>
<dbReference type="FunFam" id="3.50.30.80:FF:000001">
    <property type="entry name" value="Dihydroxy-acid dehydratase"/>
    <property type="match status" value="1"/>
</dbReference>
<dbReference type="Gene3D" id="3.50.30.80">
    <property type="entry name" value="IlvD/EDD C-terminal domain-like"/>
    <property type="match status" value="1"/>
</dbReference>
<dbReference type="HAMAP" id="MF_00012">
    <property type="entry name" value="IlvD"/>
    <property type="match status" value="1"/>
</dbReference>
<dbReference type="InterPro" id="IPR042096">
    <property type="entry name" value="Dihydro-acid_dehy_C"/>
</dbReference>
<dbReference type="InterPro" id="IPR004404">
    <property type="entry name" value="DihydroxyA_deHydtase"/>
</dbReference>
<dbReference type="InterPro" id="IPR020558">
    <property type="entry name" value="DiOHA_6PGluconate_deHydtase_CS"/>
</dbReference>
<dbReference type="InterPro" id="IPR056740">
    <property type="entry name" value="ILV_EDD_C"/>
</dbReference>
<dbReference type="InterPro" id="IPR000581">
    <property type="entry name" value="ILV_EDD_N"/>
</dbReference>
<dbReference type="InterPro" id="IPR037237">
    <property type="entry name" value="IlvD/EDD_N"/>
</dbReference>
<dbReference type="NCBIfam" id="TIGR00110">
    <property type="entry name" value="ilvD"/>
    <property type="match status" value="1"/>
</dbReference>
<dbReference type="NCBIfam" id="NF009103">
    <property type="entry name" value="PRK12448.1"/>
    <property type="match status" value="1"/>
</dbReference>
<dbReference type="PANTHER" id="PTHR43661">
    <property type="entry name" value="D-XYLONATE DEHYDRATASE"/>
    <property type="match status" value="1"/>
</dbReference>
<dbReference type="PANTHER" id="PTHR43661:SF3">
    <property type="entry name" value="D-XYLONATE DEHYDRATASE YAGF-RELATED"/>
    <property type="match status" value="1"/>
</dbReference>
<dbReference type="Pfam" id="PF24877">
    <property type="entry name" value="ILV_EDD_C"/>
    <property type="match status" value="1"/>
</dbReference>
<dbReference type="Pfam" id="PF00920">
    <property type="entry name" value="ILVD_EDD_N"/>
    <property type="match status" value="1"/>
</dbReference>
<dbReference type="SUPFAM" id="SSF143975">
    <property type="entry name" value="IlvD/EDD N-terminal domain-like"/>
    <property type="match status" value="1"/>
</dbReference>
<dbReference type="SUPFAM" id="SSF52016">
    <property type="entry name" value="LeuD/IlvD-like"/>
    <property type="match status" value="1"/>
</dbReference>
<dbReference type="PROSITE" id="PS00886">
    <property type="entry name" value="ILVD_EDD_1"/>
    <property type="match status" value="1"/>
</dbReference>
<dbReference type="PROSITE" id="PS00887">
    <property type="entry name" value="ILVD_EDD_2"/>
    <property type="match status" value="1"/>
</dbReference>
<keyword id="KW-0001">2Fe-2S</keyword>
<keyword id="KW-0028">Amino-acid biosynthesis</keyword>
<keyword id="KW-0100">Branched-chain amino acid biosynthesis</keyword>
<keyword id="KW-0408">Iron</keyword>
<keyword id="KW-0411">Iron-sulfur</keyword>
<keyword id="KW-0456">Lyase</keyword>
<keyword id="KW-0460">Magnesium</keyword>
<keyword id="KW-0479">Metal-binding</keyword>
<keyword id="KW-1185">Reference proteome</keyword>
<accession>B9JWU3</accession>
<protein>
    <recommendedName>
        <fullName evidence="1">Dihydroxy-acid dehydratase</fullName>
        <shortName evidence="1">DAD</shortName>
        <ecNumber evidence="1">4.2.1.9</ecNumber>
    </recommendedName>
</protein>
<gene>
    <name evidence="1" type="primary">ilvD</name>
    <name type="ordered locus">Avi_2414</name>
</gene>
<feature type="chain" id="PRO_1000116494" description="Dihydroxy-acid dehydratase">
    <location>
        <begin position="1"/>
        <end position="611"/>
    </location>
</feature>
<feature type="active site" description="Proton acceptor" evidence="1">
    <location>
        <position position="517"/>
    </location>
</feature>
<feature type="binding site" evidence="1">
    <location>
        <position position="81"/>
    </location>
    <ligand>
        <name>Mg(2+)</name>
        <dbReference type="ChEBI" id="CHEBI:18420"/>
    </ligand>
</feature>
<feature type="binding site" evidence="1">
    <location>
        <position position="122"/>
    </location>
    <ligand>
        <name>[2Fe-2S] cluster</name>
        <dbReference type="ChEBI" id="CHEBI:190135"/>
    </ligand>
</feature>
<feature type="binding site" evidence="1">
    <location>
        <position position="123"/>
    </location>
    <ligand>
        <name>Mg(2+)</name>
        <dbReference type="ChEBI" id="CHEBI:18420"/>
    </ligand>
</feature>
<feature type="binding site" description="via carbamate group" evidence="1">
    <location>
        <position position="124"/>
    </location>
    <ligand>
        <name>Mg(2+)</name>
        <dbReference type="ChEBI" id="CHEBI:18420"/>
    </ligand>
</feature>
<feature type="binding site" evidence="1">
    <location>
        <position position="195"/>
    </location>
    <ligand>
        <name>[2Fe-2S] cluster</name>
        <dbReference type="ChEBI" id="CHEBI:190135"/>
    </ligand>
</feature>
<feature type="binding site" evidence="1">
    <location>
        <position position="491"/>
    </location>
    <ligand>
        <name>Mg(2+)</name>
        <dbReference type="ChEBI" id="CHEBI:18420"/>
    </ligand>
</feature>
<feature type="modified residue" description="N6-carboxylysine" evidence="1">
    <location>
        <position position="124"/>
    </location>
</feature>
<sequence>MPAYRSRTTTHGRNMAGARGLWRATGMKDGDFGKPIIAVVNSFTQFVPGHVHLKDLGQLVAREIEAAGGVAKEFNTIAVDDGIAMGHDGMLYSLPSREIIADSVEYMVNAHCADAMVCISNCDKITPGMLMASLRLNIPTVFVSGGPMEAGKVVMHGKKVALDLVDAMVAAADDKISDEDVATIERSACPTCGSCSGMFTANSMNCLTEALGLSLPGNGSTLATHSDRKRLFVEAGHLIVDITRRYYEQDDENVLPRNIASKQAFENAMALDIAMGGSTNTVLHILAAAYEGEIDFNLDDIDQLSRRVPCLSKVAPAKQDVHMEDVHRAGGIMRILGELDRGGLINRDCPTVHAPTLGDAIDRWDITRTNSETVREFFRAAPGGVPTQVAFSQSSRWDELDMDRENGVIRSVEKPFSKDGGLAVLKGNIALDGCIVKTAGVDESILKFTGPAKVYESQDSAVKAILSNEVVAGDVVVIRYEGPKGGPGMQEMLYPTSYLKSKGLGKVCALITDGRFSGGTSGLSIGHVSPEAANGGTIGLVRNGDTIAIDIPNRTIELMLSEGELAARRVSQDAAGWKPAEHRKRKVTTALKAYAAFATSADLGAVRKLPE</sequence>